<reference key="1">
    <citation type="journal article" date="2004" name="J. Bacteriol.">
        <title>The genome sequence of Mycoplasma hyopneumoniae strain 232, the agent of swine mycoplasmosis.</title>
        <authorList>
            <person name="Minion F.C."/>
            <person name="Lefkowitz E.J."/>
            <person name="Madsen M.L."/>
            <person name="Cleary B.J."/>
            <person name="Swartzell S.M."/>
            <person name="Mahairas G.G."/>
        </authorList>
    </citation>
    <scope>NUCLEOTIDE SEQUENCE [LARGE SCALE GENOMIC DNA]</scope>
    <source>
        <strain>232</strain>
    </source>
</reference>
<gene>
    <name evidence="1" type="primary">asnS</name>
    <name type="ordered locus">mhp416</name>
</gene>
<sequence>MFQTINEISIHPELYNQKKVLIQGWITNIRGNLKIIFVELNDGSSFKNLQCVLKKEFIDFDKIENLALGVAVEISGIFSNTPERQQFGEVLVETLEIKGNNYNTNFPIQNQEISLEVLRQMPHFRHRSRLFRVIMKLRSALFFEIHKFFRRQGFINFSAPILTSNDGEGAGEVFIVDDENKDFFNKKTTLGVTGQLHAEAYALGFKKVYTFAPTFRAERSNTRRHAAEFWMIEPEVAFFTLEQIIELAVKLLQKVIKSVIIRNKDEFIFLEKAGDKNLRKRLLQFCDSQVTQISYEKAIELLLEHQEKFEEKDLFFGCDLKTEHERFLTEEIFHMPVVIINYPKNLKAFYMHQNEDGQTVAAFDLLVPGIGELIGGSQREVRYEKLLARMNELNMNIEEFQWYLDLRKYGNPGSSGFGLGFERLLMYITGIENIRDVIPFPRTNKNILM</sequence>
<evidence type="ECO:0000255" key="1">
    <source>
        <dbReference type="HAMAP-Rule" id="MF_00534"/>
    </source>
</evidence>
<feature type="chain" id="PRO_0000176429" description="Asparagine--tRNA ligase">
    <location>
        <begin position="1"/>
        <end position="449"/>
    </location>
</feature>
<name>SYN_MESH2</name>
<accession>Q600N9</accession>
<proteinExistence type="inferred from homology"/>
<protein>
    <recommendedName>
        <fullName evidence="1">Asparagine--tRNA ligase</fullName>
        <ecNumber evidence="1">6.1.1.22</ecNumber>
    </recommendedName>
    <alternativeName>
        <fullName evidence="1">Asparaginyl-tRNA synthetase</fullName>
        <shortName evidence="1">AsnRS</shortName>
    </alternativeName>
</protein>
<keyword id="KW-0030">Aminoacyl-tRNA synthetase</keyword>
<keyword id="KW-0067">ATP-binding</keyword>
<keyword id="KW-0963">Cytoplasm</keyword>
<keyword id="KW-0436">Ligase</keyword>
<keyword id="KW-0547">Nucleotide-binding</keyword>
<keyword id="KW-0648">Protein biosynthesis</keyword>
<organism>
    <name type="scientific">Mesomycoplasma hyopneumoniae (strain 232)</name>
    <name type="common">Mycoplasma hyopneumoniae</name>
    <dbReference type="NCBI Taxonomy" id="295358"/>
    <lineage>
        <taxon>Bacteria</taxon>
        <taxon>Bacillati</taxon>
        <taxon>Mycoplasmatota</taxon>
        <taxon>Mycoplasmoidales</taxon>
        <taxon>Metamycoplasmataceae</taxon>
        <taxon>Mesomycoplasma</taxon>
    </lineage>
</organism>
<comment type="catalytic activity">
    <reaction evidence="1">
        <text>tRNA(Asn) + L-asparagine + ATP = L-asparaginyl-tRNA(Asn) + AMP + diphosphate + H(+)</text>
        <dbReference type="Rhea" id="RHEA:11180"/>
        <dbReference type="Rhea" id="RHEA-COMP:9659"/>
        <dbReference type="Rhea" id="RHEA-COMP:9674"/>
        <dbReference type="ChEBI" id="CHEBI:15378"/>
        <dbReference type="ChEBI" id="CHEBI:30616"/>
        <dbReference type="ChEBI" id="CHEBI:33019"/>
        <dbReference type="ChEBI" id="CHEBI:58048"/>
        <dbReference type="ChEBI" id="CHEBI:78442"/>
        <dbReference type="ChEBI" id="CHEBI:78515"/>
        <dbReference type="ChEBI" id="CHEBI:456215"/>
        <dbReference type="EC" id="6.1.1.22"/>
    </reaction>
</comment>
<comment type="subunit">
    <text evidence="1">Homodimer.</text>
</comment>
<comment type="subcellular location">
    <subcellularLocation>
        <location evidence="1">Cytoplasm</location>
    </subcellularLocation>
</comment>
<comment type="similarity">
    <text evidence="1">Belongs to the class-II aminoacyl-tRNA synthetase family.</text>
</comment>
<dbReference type="EC" id="6.1.1.22" evidence="1"/>
<dbReference type="EMBL" id="AE017332">
    <property type="protein sequence ID" value="AAV27566.1"/>
    <property type="molecule type" value="Genomic_DNA"/>
</dbReference>
<dbReference type="RefSeq" id="WP_011206250.1">
    <property type="nucleotide sequence ID" value="NC_006360.1"/>
</dbReference>
<dbReference type="SMR" id="Q600N9"/>
<dbReference type="KEGG" id="mhy:mhp416"/>
<dbReference type="eggNOG" id="COG0017">
    <property type="taxonomic scope" value="Bacteria"/>
</dbReference>
<dbReference type="HOGENOM" id="CLU_004553_2_0_14"/>
<dbReference type="PhylomeDB" id="Q600N9"/>
<dbReference type="Proteomes" id="UP000006822">
    <property type="component" value="Chromosome"/>
</dbReference>
<dbReference type="GO" id="GO:0005737">
    <property type="term" value="C:cytoplasm"/>
    <property type="evidence" value="ECO:0007669"/>
    <property type="project" value="UniProtKB-SubCell"/>
</dbReference>
<dbReference type="GO" id="GO:0004816">
    <property type="term" value="F:asparagine-tRNA ligase activity"/>
    <property type="evidence" value="ECO:0007669"/>
    <property type="project" value="UniProtKB-UniRule"/>
</dbReference>
<dbReference type="GO" id="GO:0005524">
    <property type="term" value="F:ATP binding"/>
    <property type="evidence" value="ECO:0007669"/>
    <property type="project" value="UniProtKB-UniRule"/>
</dbReference>
<dbReference type="GO" id="GO:0003676">
    <property type="term" value="F:nucleic acid binding"/>
    <property type="evidence" value="ECO:0007669"/>
    <property type="project" value="InterPro"/>
</dbReference>
<dbReference type="GO" id="GO:0006421">
    <property type="term" value="P:asparaginyl-tRNA aminoacylation"/>
    <property type="evidence" value="ECO:0007669"/>
    <property type="project" value="UniProtKB-UniRule"/>
</dbReference>
<dbReference type="CDD" id="cd04318">
    <property type="entry name" value="EcAsnRS_like_N"/>
    <property type="match status" value="1"/>
</dbReference>
<dbReference type="FunFam" id="3.30.930.10:FF:000016">
    <property type="entry name" value="Asparagine--tRNA ligase"/>
    <property type="match status" value="1"/>
</dbReference>
<dbReference type="Gene3D" id="3.30.930.10">
    <property type="entry name" value="Bira Bifunctional Protein, Domain 2"/>
    <property type="match status" value="1"/>
</dbReference>
<dbReference type="Gene3D" id="2.40.50.140">
    <property type="entry name" value="Nucleic acid-binding proteins"/>
    <property type="match status" value="1"/>
</dbReference>
<dbReference type="HAMAP" id="MF_00534">
    <property type="entry name" value="Asn_tRNA_synth"/>
    <property type="match status" value="1"/>
</dbReference>
<dbReference type="InterPro" id="IPR004364">
    <property type="entry name" value="Aa-tRNA-synt_II"/>
</dbReference>
<dbReference type="InterPro" id="IPR006195">
    <property type="entry name" value="aa-tRNA-synth_II"/>
</dbReference>
<dbReference type="InterPro" id="IPR045864">
    <property type="entry name" value="aa-tRNA-synth_II/BPL/LPL"/>
</dbReference>
<dbReference type="InterPro" id="IPR004522">
    <property type="entry name" value="Asn-tRNA-ligase"/>
</dbReference>
<dbReference type="InterPro" id="IPR002312">
    <property type="entry name" value="Asp/Asn-tRNA-synth_IIb"/>
</dbReference>
<dbReference type="InterPro" id="IPR012340">
    <property type="entry name" value="NA-bd_OB-fold"/>
</dbReference>
<dbReference type="InterPro" id="IPR004365">
    <property type="entry name" value="NA-bd_OB_tRNA"/>
</dbReference>
<dbReference type="NCBIfam" id="TIGR00457">
    <property type="entry name" value="asnS"/>
    <property type="match status" value="1"/>
</dbReference>
<dbReference type="NCBIfam" id="NF003037">
    <property type="entry name" value="PRK03932.1"/>
    <property type="match status" value="1"/>
</dbReference>
<dbReference type="PANTHER" id="PTHR22594:SF34">
    <property type="entry name" value="ASPARAGINE--TRNA LIGASE, MITOCHONDRIAL-RELATED"/>
    <property type="match status" value="1"/>
</dbReference>
<dbReference type="PANTHER" id="PTHR22594">
    <property type="entry name" value="ASPARTYL/LYSYL-TRNA SYNTHETASE"/>
    <property type="match status" value="1"/>
</dbReference>
<dbReference type="Pfam" id="PF00152">
    <property type="entry name" value="tRNA-synt_2"/>
    <property type="match status" value="1"/>
</dbReference>
<dbReference type="Pfam" id="PF01336">
    <property type="entry name" value="tRNA_anti-codon"/>
    <property type="match status" value="1"/>
</dbReference>
<dbReference type="PRINTS" id="PR01042">
    <property type="entry name" value="TRNASYNTHASP"/>
</dbReference>
<dbReference type="SUPFAM" id="SSF55681">
    <property type="entry name" value="Class II aaRS and biotin synthetases"/>
    <property type="match status" value="1"/>
</dbReference>
<dbReference type="SUPFAM" id="SSF50249">
    <property type="entry name" value="Nucleic acid-binding proteins"/>
    <property type="match status" value="1"/>
</dbReference>
<dbReference type="PROSITE" id="PS50862">
    <property type="entry name" value="AA_TRNA_LIGASE_II"/>
    <property type="match status" value="1"/>
</dbReference>